<gene>
    <name evidence="1" type="primary">rplL</name>
    <name evidence="1" type="synonym">rpl12</name>
    <name type="ordered locus">PMT_2091</name>
</gene>
<evidence type="ECO:0000255" key="1">
    <source>
        <dbReference type="HAMAP-Rule" id="MF_00368"/>
    </source>
</evidence>
<evidence type="ECO:0000305" key="2"/>
<organism>
    <name type="scientific">Prochlorococcus marinus (strain MIT 9313)</name>
    <dbReference type="NCBI Taxonomy" id="74547"/>
    <lineage>
        <taxon>Bacteria</taxon>
        <taxon>Bacillati</taxon>
        <taxon>Cyanobacteriota</taxon>
        <taxon>Cyanophyceae</taxon>
        <taxon>Synechococcales</taxon>
        <taxon>Prochlorococcaceae</taxon>
        <taxon>Prochlorococcus</taxon>
    </lineage>
</organism>
<proteinExistence type="inferred from homology"/>
<dbReference type="EMBL" id="BX548175">
    <property type="protein sequence ID" value="CAE22265.1"/>
    <property type="molecule type" value="Genomic_DNA"/>
</dbReference>
<dbReference type="RefSeq" id="WP_011131455.1">
    <property type="nucleotide sequence ID" value="NC_005071.1"/>
</dbReference>
<dbReference type="SMR" id="Q7V476"/>
<dbReference type="KEGG" id="pmt:PMT_2091"/>
<dbReference type="eggNOG" id="COG0222">
    <property type="taxonomic scope" value="Bacteria"/>
</dbReference>
<dbReference type="HOGENOM" id="CLU_086499_3_0_3"/>
<dbReference type="OrthoDB" id="9811748at2"/>
<dbReference type="Proteomes" id="UP000001423">
    <property type="component" value="Chromosome"/>
</dbReference>
<dbReference type="GO" id="GO:0022625">
    <property type="term" value="C:cytosolic large ribosomal subunit"/>
    <property type="evidence" value="ECO:0007669"/>
    <property type="project" value="TreeGrafter"/>
</dbReference>
<dbReference type="GO" id="GO:0003729">
    <property type="term" value="F:mRNA binding"/>
    <property type="evidence" value="ECO:0007669"/>
    <property type="project" value="TreeGrafter"/>
</dbReference>
<dbReference type="GO" id="GO:0003735">
    <property type="term" value="F:structural constituent of ribosome"/>
    <property type="evidence" value="ECO:0007669"/>
    <property type="project" value="InterPro"/>
</dbReference>
<dbReference type="GO" id="GO:0006412">
    <property type="term" value="P:translation"/>
    <property type="evidence" value="ECO:0007669"/>
    <property type="project" value="UniProtKB-UniRule"/>
</dbReference>
<dbReference type="FunFam" id="3.30.1390.10:FF:000001">
    <property type="entry name" value="50S ribosomal protein L7/L12"/>
    <property type="match status" value="1"/>
</dbReference>
<dbReference type="Gene3D" id="3.30.1390.10">
    <property type="match status" value="1"/>
</dbReference>
<dbReference type="Gene3D" id="1.20.5.710">
    <property type="entry name" value="Single helix bin"/>
    <property type="match status" value="1"/>
</dbReference>
<dbReference type="HAMAP" id="MF_00368">
    <property type="entry name" value="Ribosomal_bL12"/>
    <property type="match status" value="1"/>
</dbReference>
<dbReference type="InterPro" id="IPR000206">
    <property type="entry name" value="Ribosomal_bL12"/>
</dbReference>
<dbReference type="InterPro" id="IPR013823">
    <property type="entry name" value="Ribosomal_bL12_C"/>
</dbReference>
<dbReference type="InterPro" id="IPR014719">
    <property type="entry name" value="Ribosomal_bL12_C/ClpS-like"/>
</dbReference>
<dbReference type="InterPro" id="IPR008932">
    <property type="entry name" value="Ribosomal_bL12_oligo"/>
</dbReference>
<dbReference type="InterPro" id="IPR036235">
    <property type="entry name" value="Ribosomal_bL12_oligo_N_sf"/>
</dbReference>
<dbReference type="NCBIfam" id="TIGR00855">
    <property type="entry name" value="L12"/>
    <property type="match status" value="1"/>
</dbReference>
<dbReference type="PANTHER" id="PTHR45987">
    <property type="entry name" value="39S RIBOSOMAL PROTEIN L12"/>
    <property type="match status" value="1"/>
</dbReference>
<dbReference type="PANTHER" id="PTHR45987:SF4">
    <property type="entry name" value="LARGE RIBOSOMAL SUBUNIT PROTEIN BL12M"/>
    <property type="match status" value="1"/>
</dbReference>
<dbReference type="Pfam" id="PF00542">
    <property type="entry name" value="Ribosomal_L12"/>
    <property type="match status" value="1"/>
</dbReference>
<dbReference type="Pfam" id="PF16320">
    <property type="entry name" value="Ribosomal_L12_N"/>
    <property type="match status" value="1"/>
</dbReference>
<dbReference type="SUPFAM" id="SSF54736">
    <property type="entry name" value="ClpS-like"/>
    <property type="match status" value="1"/>
</dbReference>
<dbReference type="SUPFAM" id="SSF48300">
    <property type="entry name" value="Ribosomal protein L7/12, oligomerisation (N-terminal) domain"/>
    <property type="match status" value="1"/>
</dbReference>
<feature type="chain" id="PRO_0000243467" description="Large ribosomal subunit protein bL12">
    <location>
        <begin position="1"/>
        <end position="131"/>
    </location>
</feature>
<reference key="1">
    <citation type="journal article" date="2003" name="Nature">
        <title>Genome divergence in two Prochlorococcus ecotypes reflects oceanic niche differentiation.</title>
        <authorList>
            <person name="Rocap G."/>
            <person name="Larimer F.W."/>
            <person name="Lamerdin J.E."/>
            <person name="Malfatti S."/>
            <person name="Chain P."/>
            <person name="Ahlgren N.A."/>
            <person name="Arellano A."/>
            <person name="Coleman M."/>
            <person name="Hauser L."/>
            <person name="Hess W.R."/>
            <person name="Johnson Z.I."/>
            <person name="Land M.L."/>
            <person name="Lindell D."/>
            <person name="Post A.F."/>
            <person name="Regala W."/>
            <person name="Shah M."/>
            <person name="Shaw S.L."/>
            <person name="Steglich C."/>
            <person name="Sullivan M.B."/>
            <person name="Ting C.S."/>
            <person name="Tolonen A."/>
            <person name="Webb E.A."/>
            <person name="Zinser E.R."/>
            <person name="Chisholm S.W."/>
        </authorList>
    </citation>
    <scope>NUCLEOTIDE SEQUENCE [LARGE SCALE GENOMIC DNA]</scope>
    <source>
        <strain>MIT 9313</strain>
    </source>
</reference>
<name>RL7_PROMM</name>
<accession>Q7V476</accession>
<comment type="function">
    <text evidence="1">Forms part of the ribosomal stalk which helps the ribosome interact with GTP-bound translation factors. Is thus essential for accurate translation.</text>
</comment>
<comment type="subunit">
    <text evidence="1">Homodimer. Part of the ribosomal stalk of the 50S ribosomal subunit. Forms a multimeric L10(L12)X complex, where L10 forms an elongated spine to which 2 to 4 L12 dimers bind in a sequential fashion. Binds GTP-bound translation factors.</text>
</comment>
<comment type="similarity">
    <text evidence="1">Belongs to the bacterial ribosomal protein bL12 family.</text>
</comment>
<sequence>MSKKTDDILDSLKTLSLLEASELVKQIEDAFGVSAAASAGVVVAAGGAAGGGAAAEAAEEQTEFDVVLESFDASAKIKVLKAVREATGLGLGDAKAMVEAAPKTIKEGIAKNDAEALKKAIEEVGGKVSLK</sequence>
<protein>
    <recommendedName>
        <fullName evidence="1">Large ribosomal subunit protein bL12</fullName>
    </recommendedName>
    <alternativeName>
        <fullName evidence="2">50S ribosomal protein L7/L12</fullName>
    </alternativeName>
</protein>
<keyword id="KW-1185">Reference proteome</keyword>
<keyword id="KW-0687">Ribonucleoprotein</keyword>
<keyword id="KW-0689">Ribosomal protein</keyword>